<keyword id="KW-0378">Hydrolase</keyword>
<feature type="chain" id="PRO_1000058558" description="Bis(5'-nucleosyl)-tetraphosphatase, symmetrical">
    <location>
        <begin position="1"/>
        <end position="282"/>
    </location>
</feature>
<organism>
    <name type="scientific">Enterobacter sp. (strain 638)</name>
    <dbReference type="NCBI Taxonomy" id="399742"/>
    <lineage>
        <taxon>Bacteria</taxon>
        <taxon>Pseudomonadati</taxon>
        <taxon>Pseudomonadota</taxon>
        <taxon>Gammaproteobacteria</taxon>
        <taxon>Enterobacterales</taxon>
        <taxon>Enterobacteriaceae</taxon>
        <taxon>Enterobacter</taxon>
    </lineage>
</organism>
<dbReference type="EC" id="3.6.1.41" evidence="1"/>
<dbReference type="EMBL" id="CP000653">
    <property type="protein sequence ID" value="ABP59285.1"/>
    <property type="molecule type" value="Genomic_DNA"/>
</dbReference>
<dbReference type="RefSeq" id="WP_012016007.1">
    <property type="nucleotide sequence ID" value="NC_009436.1"/>
</dbReference>
<dbReference type="SMR" id="A4W6F5"/>
<dbReference type="STRING" id="399742.Ent638_0598"/>
<dbReference type="KEGG" id="ent:Ent638_0598"/>
<dbReference type="eggNOG" id="COG0639">
    <property type="taxonomic scope" value="Bacteria"/>
</dbReference>
<dbReference type="HOGENOM" id="CLU_056184_2_0_6"/>
<dbReference type="OrthoDB" id="9807890at2"/>
<dbReference type="Proteomes" id="UP000000230">
    <property type="component" value="Chromosome"/>
</dbReference>
<dbReference type="GO" id="GO:0008803">
    <property type="term" value="F:bis(5'-nucleosyl)-tetraphosphatase (symmetrical) activity"/>
    <property type="evidence" value="ECO:0007669"/>
    <property type="project" value="UniProtKB-UniRule"/>
</dbReference>
<dbReference type="CDD" id="cd07422">
    <property type="entry name" value="MPP_ApaH"/>
    <property type="match status" value="1"/>
</dbReference>
<dbReference type="FunFam" id="3.60.21.10:FF:000013">
    <property type="entry name" value="Bis(5'-nucleosyl)-tetraphosphatase, symmetrical"/>
    <property type="match status" value="1"/>
</dbReference>
<dbReference type="Gene3D" id="3.60.21.10">
    <property type="match status" value="1"/>
</dbReference>
<dbReference type="HAMAP" id="MF_00199">
    <property type="entry name" value="ApaH"/>
    <property type="match status" value="1"/>
</dbReference>
<dbReference type="InterPro" id="IPR004617">
    <property type="entry name" value="ApaH"/>
</dbReference>
<dbReference type="InterPro" id="IPR004843">
    <property type="entry name" value="Calcineurin-like_PHP_ApaH"/>
</dbReference>
<dbReference type="InterPro" id="IPR029052">
    <property type="entry name" value="Metallo-depent_PP-like"/>
</dbReference>
<dbReference type="NCBIfam" id="TIGR00668">
    <property type="entry name" value="apaH"/>
    <property type="match status" value="1"/>
</dbReference>
<dbReference type="NCBIfam" id="NF001204">
    <property type="entry name" value="PRK00166.1"/>
    <property type="match status" value="1"/>
</dbReference>
<dbReference type="PANTHER" id="PTHR40942">
    <property type="match status" value="1"/>
</dbReference>
<dbReference type="PANTHER" id="PTHR40942:SF4">
    <property type="entry name" value="CYTOCHROME C5"/>
    <property type="match status" value="1"/>
</dbReference>
<dbReference type="Pfam" id="PF00149">
    <property type="entry name" value="Metallophos"/>
    <property type="match status" value="1"/>
</dbReference>
<dbReference type="PIRSF" id="PIRSF000903">
    <property type="entry name" value="B5n-ttraPtase_sm"/>
    <property type="match status" value="1"/>
</dbReference>
<dbReference type="SUPFAM" id="SSF56300">
    <property type="entry name" value="Metallo-dependent phosphatases"/>
    <property type="match status" value="1"/>
</dbReference>
<gene>
    <name evidence="1" type="primary">apaH</name>
    <name type="ordered locus">Ent638_0598</name>
</gene>
<sequence length="282" mass="31513">MSTYLIGDVHGCYDELIALLKQVDFTPGQDTLWLTGDLVARGPGSLDVLRFVKSLGDSVRLVLGNHDLHLLAVFAGISRNKPKDRITPLLEAHDVDELINWLRRQPLLQIDEEKKLVMAHAGITPQWDLQTAKECARDVEAVLASDSYPFFLDAMYGDMPNNWSPELSGVARLRFVTNAFTRMRYCFPNGQLDMYCKDTPENAPSPLKPWFAIPGPVTNEYSVVFGHWASLEGKGTPENIYALDTGCCWGGDMTCLRWEDKAYFIQPSNRQLDLGEGEAAAS</sequence>
<reference key="1">
    <citation type="journal article" date="2010" name="PLoS Genet.">
        <title>Genome sequence of the plant growth promoting endophytic bacterium Enterobacter sp. 638.</title>
        <authorList>
            <person name="Taghavi S."/>
            <person name="van der Lelie D."/>
            <person name="Hoffman A."/>
            <person name="Zhang Y.B."/>
            <person name="Walla M.D."/>
            <person name="Vangronsveld J."/>
            <person name="Newman L."/>
            <person name="Monchy S."/>
        </authorList>
    </citation>
    <scope>NUCLEOTIDE SEQUENCE [LARGE SCALE GENOMIC DNA]</scope>
    <source>
        <strain>638</strain>
    </source>
</reference>
<comment type="function">
    <text evidence="1">Hydrolyzes diadenosine 5',5'''-P1,P4-tetraphosphate to yield ADP.</text>
</comment>
<comment type="catalytic activity">
    <reaction evidence="1">
        <text>P(1),P(4)-bis(5'-adenosyl) tetraphosphate + H2O = 2 ADP + 2 H(+)</text>
        <dbReference type="Rhea" id="RHEA:24252"/>
        <dbReference type="ChEBI" id="CHEBI:15377"/>
        <dbReference type="ChEBI" id="CHEBI:15378"/>
        <dbReference type="ChEBI" id="CHEBI:58141"/>
        <dbReference type="ChEBI" id="CHEBI:456216"/>
        <dbReference type="EC" id="3.6.1.41"/>
    </reaction>
</comment>
<comment type="similarity">
    <text evidence="1">Belongs to the Ap4A hydrolase family.</text>
</comment>
<accession>A4W6F5</accession>
<proteinExistence type="inferred from homology"/>
<protein>
    <recommendedName>
        <fullName evidence="1">Bis(5'-nucleosyl)-tetraphosphatase, symmetrical</fullName>
        <ecNumber evidence="1">3.6.1.41</ecNumber>
    </recommendedName>
    <alternativeName>
        <fullName evidence="1">Ap4A hydrolase</fullName>
    </alternativeName>
    <alternativeName>
        <fullName evidence="1">Diadenosine 5',5'''-P1,P4-tetraphosphate pyrophosphohydrolase</fullName>
    </alternativeName>
    <alternativeName>
        <fullName evidence="1">Diadenosine tetraphosphatase</fullName>
    </alternativeName>
</protein>
<name>APAH_ENT38</name>
<evidence type="ECO:0000255" key="1">
    <source>
        <dbReference type="HAMAP-Rule" id="MF_00199"/>
    </source>
</evidence>